<protein>
    <recommendedName>
        <fullName>Ferric uptake regulation protein</fullName>
        <shortName>Ferric uptake regulator</shortName>
    </recommendedName>
</protein>
<comment type="function">
    <text evidence="1">Acts as a global negative controlling element, employing Fe(2+) as a cofactor to bind the operator of the repressed genes. Regulates the expression of several outer-membrane proteins including the iron transport operon (By similarity).</text>
</comment>
<comment type="subunit">
    <text evidence="1">Homodimer.</text>
</comment>
<comment type="subcellular location">
    <subcellularLocation>
        <location evidence="1">Cytoplasm</location>
    </subcellularLocation>
</comment>
<comment type="similarity">
    <text evidence="2">Belongs to the Fur family.</text>
</comment>
<dbReference type="EMBL" id="AE014075">
    <property type="protein sequence ID" value="AAN79243.1"/>
    <property type="molecule type" value="Genomic_DNA"/>
</dbReference>
<dbReference type="RefSeq" id="WP_000131702.1">
    <property type="nucleotide sequence ID" value="NZ_CP051263.1"/>
</dbReference>
<dbReference type="BMRB" id="P0A9B0"/>
<dbReference type="SMR" id="P0A9B0"/>
<dbReference type="STRING" id="199310.c0770"/>
<dbReference type="GeneID" id="93776802"/>
<dbReference type="KEGG" id="ecc:c0770"/>
<dbReference type="eggNOG" id="COG0735">
    <property type="taxonomic scope" value="Bacteria"/>
</dbReference>
<dbReference type="HOGENOM" id="CLU_096072_3_3_6"/>
<dbReference type="BioCyc" id="ECOL199310:C0770-MONOMER"/>
<dbReference type="Proteomes" id="UP000001410">
    <property type="component" value="Chromosome"/>
</dbReference>
<dbReference type="GO" id="GO:0005829">
    <property type="term" value="C:cytosol"/>
    <property type="evidence" value="ECO:0007669"/>
    <property type="project" value="TreeGrafter"/>
</dbReference>
<dbReference type="GO" id="GO:0003700">
    <property type="term" value="F:DNA-binding transcription factor activity"/>
    <property type="evidence" value="ECO:0007669"/>
    <property type="project" value="InterPro"/>
</dbReference>
<dbReference type="GO" id="GO:0000976">
    <property type="term" value="F:transcription cis-regulatory region binding"/>
    <property type="evidence" value="ECO:0007669"/>
    <property type="project" value="TreeGrafter"/>
</dbReference>
<dbReference type="GO" id="GO:0008270">
    <property type="term" value="F:zinc ion binding"/>
    <property type="evidence" value="ECO:0007669"/>
    <property type="project" value="TreeGrafter"/>
</dbReference>
<dbReference type="GO" id="GO:0045892">
    <property type="term" value="P:negative regulation of DNA-templated transcription"/>
    <property type="evidence" value="ECO:0007669"/>
    <property type="project" value="TreeGrafter"/>
</dbReference>
<dbReference type="GO" id="GO:1900705">
    <property type="term" value="P:negative regulation of siderophore biosynthetic process"/>
    <property type="evidence" value="ECO:0007669"/>
    <property type="project" value="TreeGrafter"/>
</dbReference>
<dbReference type="CDD" id="cd07153">
    <property type="entry name" value="Fur_like"/>
    <property type="match status" value="1"/>
</dbReference>
<dbReference type="FunFam" id="1.10.10.10:FF:000007">
    <property type="entry name" value="Ferric uptake regulation protein"/>
    <property type="match status" value="1"/>
</dbReference>
<dbReference type="FunFam" id="3.30.1490.190:FF:000001">
    <property type="entry name" value="Ferric uptake regulation protein"/>
    <property type="match status" value="1"/>
</dbReference>
<dbReference type="Gene3D" id="3.30.1490.190">
    <property type="match status" value="1"/>
</dbReference>
<dbReference type="Gene3D" id="1.10.10.10">
    <property type="entry name" value="Winged helix-like DNA-binding domain superfamily/Winged helix DNA-binding domain"/>
    <property type="match status" value="1"/>
</dbReference>
<dbReference type="InterPro" id="IPR002481">
    <property type="entry name" value="FUR"/>
</dbReference>
<dbReference type="InterPro" id="IPR043135">
    <property type="entry name" value="Fur_C"/>
</dbReference>
<dbReference type="InterPro" id="IPR036388">
    <property type="entry name" value="WH-like_DNA-bd_sf"/>
</dbReference>
<dbReference type="InterPro" id="IPR036390">
    <property type="entry name" value="WH_DNA-bd_sf"/>
</dbReference>
<dbReference type="NCBIfam" id="NF006999">
    <property type="entry name" value="PRK09462.1"/>
    <property type="match status" value="1"/>
</dbReference>
<dbReference type="PANTHER" id="PTHR33202:SF2">
    <property type="entry name" value="FERRIC UPTAKE REGULATION PROTEIN"/>
    <property type="match status" value="1"/>
</dbReference>
<dbReference type="PANTHER" id="PTHR33202">
    <property type="entry name" value="ZINC UPTAKE REGULATION PROTEIN"/>
    <property type="match status" value="1"/>
</dbReference>
<dbReference type="Pfam" id="PF01475">
    <property type="entry name" value="FUR"/>
    <property type="match status" value="1"/>
</dbReference>
<dbReference type="SUPFAM" id="SSF46785">
    <property type="entry name" value="Winged helix' DNA-binding domain"/>
    <property type="match status" value="1"/>
</dbReference>
<sequence length="148" mass="16795">MTDNNTALKKAGLKVTLPRLKILEVLQEPDNHHVSAEDLYKRLIDMGEEIGLATVYRVLNQFDDAGIVTRHNFEGGKSVFELTQQHHHDHLICLDCGKVIEFSDDSIEARQREIAAKHGIRLTNHSLYLYGHCAEGDCREDEHAHEGK</sequence>
<keyword id="KW-0963">Cytoplasm</keyword>
<keyword id="KW-0238">DNA-binding</keyword>
<keyword id="KW-0408">Iron</keyword>
<keyword id="KW-0479">Metal-binding</keyword>
<keyword id="KW-1185">Reference proteome</keyword>
<keyword id="KW-0678">Repressor</keyword>
<keyword id="KW-0804">Transcription</keyword>
<keyword id="KW-0805">Transcription regulation</keyword>
<keyword id="KW-0862">Zinc</keyword>
<organism>
    <name type="scientific">Escherichia coli O6:H1 (strain CFT073 / ATCC 700928 / UPEC)</name>
    <dbReference type="NCBI Taxonomy" id="199310"/>
    <lineage>
        <taxon>Bacteria</taxon>
        <taxon>Pseudomonadati</taxon>
        <taxon>Pseudomonadota</taxon>
        <taxon>Gammaproteobacteria</taxon>
        <taxon>Enterobacterales</taxon>
        <taxon>Enterobacteriaceae</taxon>
        <taxon>Escherichia</taxon>
    </lineage>
</organism>
<gene>
    <name type="primary">fur</name>
    <name type="ordered locus">c0770</name>
</gene>
<reference key="1">
    <citation type="journal article" date="2002" name="Proc. Natl. Acad. Sci. U.S.A.">
        <title>Extensive mosaic structure revealed by the complete genome sequence of uropathogenic Escherichia coli.</title>
        <authorList>
            <person name="Welch R.A."/>
            <person name="Burland V."/>
            <person name="Plunkett G. III"/>
            <person name="Redford P."/>
            <person name="Roesch P."/>
            <person name="Rasko D."/>
            <person name="Buckles E.L."/>
            <person name="Liou S.-R."/>
            <person name="Boutin A."/>
            <person name="Hackett J."/>
            <person name="Stroud D."/>
            <person name="Mayhew G.F."/>
            <person name="Rose D.J."/>
            <person name="Zhou S."/>
            <person name="Schwartz D.C."/>
            <person name="Perna N.T."/>
            <person name="Mobley H.L.T."/>
            <person name="Donnenberg M.S."/>
            <person name="Blattner F.R."/>
        </authorList>
    </citation>
    <scope>NUCLEOTIDE SEQUENCE [LARGE SCALE GENOMIC DNA]</scope>
    <source>
        <strain>CFT073 / ATCC 700928 / UPEC</strain>
    </source>
</reference>
<evidence type="ECO:0000250" key="1"/>
<evidence type="ECO:0000305" key="2"/>
<proteinExistence type="inferred from homology"/>
<name>FUR_ECOL6</name>
<accession>P0A9B0</accession>
<accession>P06975</accession>
<feature type="chain" id="PRO_0000095552" description="Ferric uptake regulation protein">
    <location>
        <begin position="1"/>
        <end position="148"/>
    </location>
</feature>
<feature type="region of interest" description="DNA-binding" evidence="1">
    <location>
        <begin position="1"/>
        <end position="84"/>
    </location>
</feature>
<feature type="region of interest" description="Dimerization" evidence="1">
    <location>
        <begin position="85"/>
        <end position="148"/>
    </location>
</feature>
<feature type="binding site" evidence="1">
    <location>
        <position position="33"/>
    </location>
    <ligand>
        <name>Zn(2+)</name>
        <dbReference type="ChEBI" id="CHEBI:29105"/>
    </ligand>
</feature>
<feature type="binding site" evidence="1">
    <location>
        <position position="81"/>
    </location>
    <ligand>
        <name>Zn(2+)</name>
        <dbReference type="ChEBI" id="CHEBI:29105"/>
    </ligand>
</feature>
<feature type="binding site" evidence="1">
    <location>
        <position position="87"/>
    </location>
    <ligand>
        <name>Fe cation</name>
        <dbReference type="ChEBI" id="CHEBI:24875"/>
    </ligand>
</feature>
<feature type="binding site" evidence="1">
    <location>
        <position position="89"/>
    </location>
    <ligand>
        <name>Fe cation</name>
        <dbReference type="ChEBI" id="CHEBI:24875"/>
    </ligand>
</feature>
<feature type="binding site" evidence="1">
    <location>
        <position position="90"/>
    </location>
    <ligand>
        <name>Zn(2+)</name>
        <dbReference type="ChEBI" id="CHEBI:29105"/>
    </ligand>
</feature>
<feature type="binding site" evidence="1">
    <location>
        <position position="93"/>
    </location>
    <ligand>
        <name>Zn(2+)</name>
        <dbReference type="ChEBI" id="CHEBI:29105"/>
    </ligand>
</feature>
<feature type="binding site" evidence="1">
    <location>
        <position position="96"/>
    </location>
    <ligand>
        <name>Zn(2+)</name>
        <dbReference type="ChEBI" id="CHEBI:29105"/>
    </ligand>
</feature>
<feature type="binding site" evidence="1">
    <location>
        <position position="101"/>
    </location>
    <ligand>
        <name>Zn(2+)</name>
        <dbReference type="ChEBI" id="CHEBI:29105"/>
    </ligand>
</feature>
<feature type="binding site" evidence="1">
    <location>
        <position position="108"/>
    </location>
    <ligand>
        <name>Fe cation</name>
        <dbReference type="ChEBI" id="CHEBI:24875"/>
    </ligand>
</feature>
<feature type="binding site" evidence="1">
    <location>
        <position position="125"/>
    </location>
    <ligand>
        <name>Fe cation</name>
        <dbReference type="ChEBI" id="CHEBI:24875"/>
    </ligand>
</feature>